<name>MINC_VIBCH</name>
<protein>
    <recommendedName>
        <fullName>Probable septum site-determining protein MinC</fullName>
    </recommendedName>
</protein>
<keyword id="KW-0131">Cell cycle</keyword>
<keyword id="KW-0132">Cell division</keyword>
<keyword id="KW-1185">Reference proteome</keyword>
<keyword id="KW-0717">Septation</keyword>
<feature type="chain" id="PRO_0000189068" description="Probable septum site-determining protein MinC">
    <location>
        <begin position="1"/>
        <end position="220"/>
    </location>
</feature>
<comment type="function">
    <text evidence="1">Cell division inhibitor that blocks the formation of polar Z ring septums. Rapidly oscillates between the poles of the cell to destabilize FtsZ filaments that have formed before they mature into polar Z rings. Prevents FtsZ polymerization (By similarity).</text>
</comment>
<comment type="subunit">
    <text evidence="1">Interacts with MinD and FtsZ.</text>
</comment>
<comment type="similarity">
    <text evidence="2">Belongs to the MinC family.</text>
</comment>
<proteinExistence type="inferred from homology"/>
<organism>
    <name type="scientific">Vibrio cholerae serotype O1 (strain ATCC 39315 / El Tor Inaba N16961)</name>
    <dbReference type="NCBI Taxonomy" id="243277"/>
    <lineage>
        <taxon>Bacteria</taxon>
        <taxon>Pseudomonadati</taxon>
        <taxon>Pseudomonadota</taxon>
        <taxon>Gammaproteobacteria</taxon>
        <taxon>Vibrionales</taxon>
        <taxon>Vibrionaceae</taxon>
        <taxon>Vibrio</taxon>
    </lineage>
</organism>
<reference key="1">
    <citation type="journal article" date="2000" name="Nature">
        <title>DNA sequence of both chromosomes of the cholera pathogen Vibrio cholerae.</title>
        <authorList>
            <person name="Heidelberg J.F."/>
            <person name="Eisen J.A."/>
            <person name="Nelson W.C."/>
            <person name="Clayton R.A."/>
            <person name="Gwinn M.L."/>
            <person name="Dodson R.J."/>
            <person name="Haft D.H."/>
            <person name="Hickey E.K."/>
            <person name="Peterson J.D."/>
            <person name="Umayam L.A."/>
            <person name="Gill S.R."/>
            <person name="Nelson K.E."/>
            <person name="Read T.D."/>
            <person name="Tettelin H."/>
            <person name="Richardson D.L."/>
            <person name="Ermolaeva M.D."/>
            <person name="Vamathevan J.J."/>
            <person name="Bass S."/>
            <person name="Qin H."/>
            <person name="Dragoi I."/>
            <person name="Sellers P."/>
            <person name="McDonald L.A."/>
            <person name="Utterback T.R."/>
            <person name="Fleischmann R.D."/>
            <person name="Nierman W.C."/>
            <person name="White O."/>
            <person name="Salzberg S.L."/>
            <person name="Smith H.O."/>
            <person name="Colwell R.R."/>
            <person name="Mekalanos J.J."/>
            <person name="Venter J.C."/>
            <person name="Fraser C.M."/>
        </authorList>
    </citation>
    <scope>NUCLEOTIDE SEQUENCE [LARGE SCALE GENOMIC DNA]</scope>
    <source>
        <strain>ATCC 39315 / El Tor Inaba N16961</strain>
    </source>
</reference>
<dbReference type="EMBL" id="AE003852">
    <property type="protein sequence ID" value="AAF95107.1"/>
    <property type="molecule type" value="Genomic_DNA"/>
</dbReference>
<dbReference type="PIR" id="B82136">
    <property type="entry name" value="B82136"/>
</dbReference>
<dbReference type="RefSeq" id="NP_231593.1">
    <property type="nucleotide sequence ID" value="NC_002505.1"/>
</dbReference>
<dbReference type="RefSeq" id="WP_000042146.1">
    <property type="nucleotide sequence ID" value="NZ_LT906614.1"/>
</dbReference>
<dbReference type="SMR" id="Q9KQN9"/>
<dbReference type="STRING" id="243277.VC_1959"/>
<dbReference type="DNASU" id="2613463"/>
<dbReference type="EnsemblBacteria" id="AAF95107">
    <property type="protein sequence ID" value="AAF95107"/>
    <property type="gene ID" value="VC_1959"/>
</dbReference>
<dbReference type="KEGG" id="vch:VC_1959"/>
<dbReference type="PATRIC" id="fig|243277.26.peg.1871"/>
<dbReference type="eggNOG" id="COG0850">
    <property type="taxonomic scope" value="Bacteria"/>
</dbReference>
<dbReference type="HOGENOM" id="CLU_067812_0_1_6"/>
<dbReference type="Proteomes" id="UP000000584">
    <property type="component" value="Chromosome 1"/>
</dbReference>
<dbReference type="GO" id="GO:0000902">
    <property type="term" value="P:cell morphogenesis"/>
    <property type="evidence" value="ECO:0007669"/>
    <property type="project" value="InterPro"/>
</dbReference>
<dbReference type="GO" id="GO:0000917">
    <property type="term" value="P:division septum assembly"/>
    <property type="evidence" value="ECO:0007669"/>
    <property type="project" value="UniProtKB-KW"/>
</dbReference>
<dbReference type="GO" id="GO:0051302">
    <property type="term" value="P:regulation of cell division"/>
    <property type="evidence" value="ECO:0007669"/>
    <property type="project" value="InterPro"/>
</dbReference>
<dbReference type="GO" id="GO:1901891">
    <property type="term" value="P:regulation of cell septum assembly"/>
    <property type="evidence" value="ECO:0007669"/>
    <property type="project" value="InterPro"/>
</dbReference>
<dbReference type="Gene3D" id="2.160.20.70">
    <property type="match status" value="1"/>
</dbReference>
<dbReference type="Gene3D" id="3.30.70.260">
    <property type="match status" value="1"/>
</dbReference>
<dbReference type="HAMAP" id="MF_00267">
    <property type="entry name" value="MinC"/>
    <property type="match status" value="1"/>
</dbReference>
<dbReference type="InterPro" id="IPR016098">
    <property type="entry name" value="CAP/MinC_C"/>
</dbReference>
<dbReference type="InterPro" id="IPR013033">
    <property type="entry name" value="MinC"/>
</dbReference>
<dbReference type="InterPro" id="IPR036145">
    <property type="entry name" value="MinC_C_sf"/>
</dbReference>
<dbReference type="InterPro" id="IPR007874">
    <property type="entry name" value="MinC_N"/>
</dbReference>
<dbReference type="InterPro" id="IPR005526">
    <property type="entry name" value="Septum_form_inhib_MinC_C"/>
</dbReference>
<dbReference type="NCBIfam" id="TIGR01222">
    <property type="entry name" value="minC"/>
    <property type="match status" value="1"/>
</dbReference>
<dbReference type="PANTHER" id="PTHR34108">
    <property type="entry name" value="SEPTUM SITE-DETERMINING PROTEIN MINC"/>
    <property type="match status" value="1"/>
</dbReference>
<dbReference type="PANTHER" id="PTHR34108:SF1">
    <property type="entry name" value="SEPTUM SITE-DETERMINING PROTEIN MINC"/>
    <property type="match status" value="1"/>
</dbReference>
<dbReference type="Pfam" id="PF03775">
    <property type="entry name" value="MinC_C"/>
    <property type="match status" value="1"/>
</dbReference>
<dbReference type="Pfam" id="PF05209">
    <property type="entry name" value="MinC_N"/>
    <property type="match status" value="1"/>
</dbReference>
<dbReference type="SUPFAM" id="SSF63848">
    <property type="entry name" value="Cell-division inhibitor MinC, C-terminal domain"/>
    <property type="match status" value="1"/>
</dbReference>
<accession>Q9KQN9</accession>
<sequence length="220" mass="23646">MSKNPDLKGSSFTLSVLHLSDNQIAHTVQFLQEKIAQAPAFFANAPVVINVAKVEGDIDYPALKQGISQAGLIPVGVTGCKDKRSQNLAVEAGFAVMTATNSPAQAPAQMAPTKVIRTPVRSGQQIYAKDGDLVILSHVSAGAEVIADGSIHIYGTLRGRAIAGASGQREARIICHDLQAELISIAGRYWLSDQIESQFWQQRVMLSMTDESLYLETLTI</sequence>
<gene>
    <name type="primary">minC</name>
    <name type="ordered locus">VC_1959</name>
</gene>
<evidence type="ECO:0000250" key="1"/>
<evidence type="ECO:0000305" key="2"/>